<comment type="function">
    <text evidence="2">Binds oxalate.</text>
</comment>
<comment type="subunit">
    <text evidence="2">Homodimer.</text>
</comment>
<sequence>MKEGTGMVVRSSEITPERISNMRGGKGEVEMAHLLSKEAMHNKARLFARMKLPPGSSVGLHKHEGEFEIYYILLGEGVFHDNGKDVPIKAGDVCFTDSGESHSIENTGNTDLEFLAVIILL</sequence>
<protein>
    <recommendedName>
        <fullName evidence="4">Oxalate-binding protein</fullName>
    </recommendedName>
    <alternativeName>
        <fullName evidence="3">Putative oxalate decarboxylase</fullName>
    </alternativeName>
</protein>
<name>OXBP_THEMA</name>
<feature type="chain" id="PRO_0000433802" description="Oxalate-binding protein">
    <location>
        <begin position="1"/>
        <end position="121"/>
    </location>
</feature>
<feature type="domain" description="Cupin type-2" evidence="1">
    <location>
        <begin position="49"/>
        <end position="117"/>
    </location>
</feature>
<feature type="binding site" evidence="2 7">
    <location>
        <position position="61"/>
    </location>
    <ligand>
        <name>Mn(2+)</name>
        <dbReference type="ChEBI" id="CHEBI:29035"/>
    </ligand>
</feature>
<feature type="binding site" evidence="2 7">
    <location>
        <position position="63"/>
    </location>
    <ligand>
        <name>Mn(2+)</name>
        <dbReference type="ChEBI" id="CHEBI:29035"/>
    </ligand>
</feature>
<feature type="binding site" evidence="2 7">
    <location>
        <position position="68"/>
    </location>
    <ligand>
        <name>Mn(2+)</name>
        <dbReference type="ChEBI" id="CHEBI:29035"/>
    </ligand>
</feature>
<feature type="binding site" evidence="2">
    <location>
        <position position="70"/>
    </location>
    <ligand>
        <name>oxalate</name>
        <dbReference type="ChEBI" id="CHEBI:30623"/>
    </ligand>
</feature>
<feature type="binding site" evidence="2 7">
    <location>
        <position position="102"/>
    </location>
    <ligand>
        <name>Mn(2+)</name>
        <dbReference type="ChEBI" id="CHEBI:29035"/>
    </ligand>
</feature>
<feature type="strand" evidence="8">
    <location>
        <begin position="8"/>
        <end position="10"/>
    </location>
</feature>
<feature type="helix" evidence="8">
    <location>
        <begin position="11"/>
        <end position="13"/>
    </location>
</feature>
<feature type="strand" evidence="8">
    <location>
        <begin position="17"/>
        <end position="21"/>
    </location>
</feature>
<feature type="helix" evidence="8">
    <location>
        <begin position="22"/>
        <end position="24"/>
    </location>
</feature>
<feature type="strand" evidence="8">
    <location>
        <begin position="26"/>
        <end position="33"/>
    </location>
</feature>
<feature type="turn" evidence="8">
    <location>
        <begin position="37"/>
        <end position="42"/>
    </location>
</feature>
<feature type="strand" evidence="8">
    <location>
        <begin position="43"/>
        <end position="52"/>
    </location>
</feature>
<feature type="strand" evidence="8">
    <location>
        <begin position="57"/>
        <end position="62"/>
    </location>
</feature>
<feature type="strand" evidence="8">
    <location>
        <begin position="65"/>
        <end position="81"/>
    </location>
</feature>
<feature type="strand" evidence="8">
    <location>
        <begin position="84"/>
        <end position="89"/>
    </location>
</feature>
<feature type="strand" evidence="8">
    <location>
        <begin position="92"/>
        <end position="96"/>
    </location>
</feature>
<feature type="strand" evidence="8">
    <location>
        <begin position="101"/>
        <end position="105"/>
    </location>
</feature>
<feature type="strand" evidence="8">
    <location>
        <begin position="108"/>
        <end position="110"/>
    </location>
</feature>
<feature type="strand" evidence="8">
    <location>
        <begin position="112"/>
        <end position="120"/>
    </location>
</feature>
<accession>Q9X113</accession>
<reference evidence="5 6" key="1">
    <citation type="journal article" date="1999" name="Nature">
        <title>Evidence for lateral gene transfer between Archaea and Bacteria from genome sequence of Thermotoga maritima.</title>
        <authorList>
            <person name="Nelson K.E."/>
            <person name="Clayton R.A."/>
            <person name="Gill S.R."/>
            <person name="Gwinn M.L."/>
            <person name="Dodson R.J."/>
            <person name="Haft D.H."/>
            <person name="Hickey E.K."/>
            <person name="Peterson J.D."/>
            <person name="Nelson W.C."/>
            <person name="Ketchum K.A."/>
            <person name="McDonald L.A."/>
            <person name="Utterback T.R."/>
            <person name="Malek J.A."/>
            <person name="Linher K.D."/>
            <person name="Garrett M.M."/>
            <person name="Stewart A.M."/>
            <person name="Cotton M.D."/>
            <person name="Pratt M.S."/>
            <person name="Phillips C.A."/>
            <person name="Richardson D.L."/>
            <person name="Heidelberg J.F."/>
            <person name="Sutton G.G."/>
            <person name="Fleischmann R.D."/>
            <person name="Eisen J.A."/>
            <person name="White O."/>
            <person name="Salzberg S.L."/>
            <person name="Smith H.O."/>
            <person name="Venter J.C."/>
            <person name="Fraser C.M."/>
        </authorList>
    </citation>
    <scope>NUCLEOTIDE SEQUENCE [LARGE SCALE GENOMIC DNA]</scope>
    <source>
        <strain evidence="6">ATCC 43589 / DSM 3109 / JCM 10099 / NBRC 100826 / MSB8</strain>
    </source>
</reference>
<reference evidence="7" key="2">
    <citation type="journal article" date="2004" name="Proteins">
        <title>Crystal structure of a putative oxalate decarboxylase (TM1287) from Thermotoga maritima at 1.95 A resolution.</title>
        <authorList>
            <person name="Schwarzenbacher R."/>
            <person name="von Delft F."/>
            <person name="Jaroszewski L."/>
            <person name="Abdubek P."/>
            <person name="Ambing E."/>
            <person name="Biorac T."/>
            <person name="Brinen L.S."/>
            <person name="Canaves J.M."/>
            <person name="Cambell J."/>
            <person name="Chiu H.J."/>
            <person name="Dai X."/>
            <person name="Deacon A.M."/>
            <person name="DiDonato M."/>
            <person name="Elsliger M.A."/>
            <person name="Eshagi S."/>
            <person name="Floyd R."/>
            <person name="Godzik A."/>
            <person name="Grittini C."/>
            <person name="Grzechnik S.K."/>
            <person name="Hampton E."/>
            <person name="Karlak C."/>
            <person name="Klock H.E."/>
            <person name="Koesema E."/>
            <person name="Kovarik J.S."/>
            <person name="Kreusch A."/>
            <person name="Kuhn P."/>
            <person name="Lesley S.A."/>
            <person name="Levin I."/>
            <person name="McMullan D."/>
            <person name="McPhillips T.M."/>
            <person name="Miller M.D."/>
            <person name="Morse A."/>
            <person name="Moy K."/>
            <person name="Ouyang J."/>
            <person name="Page R."/>
            <person name="Quijano K."/>
            <person name="Robb A."/>
            <person name="Spraggon G."/>
            <person name="Stevens R.C."/>
            <person name="van den Bedem H."/>
            <person name="Velasquez J."/>
            <person name="Vincent J."/>
            <person name="Wang X."/>
            <person name="West B."/>
            <person name="Wolf G."/>
            <person name="Xu Q."/>
            <person name="Hodgson K.O."/>
            <person name="Wooley J."/>
            <person name="Wilson I.A."/>
        </authorList>
    </citation>
    <scope>X-RAY CRYSTALLOGRAPHY (1.95 ANGSTROMS) IN COMPLEX WITH MANGANESE AND OXALATE</scope>
    <scope>FUNCTION</scope>
    <scope>SUBUNIT</scope>
    <source>
        <strain evidence="3">ATCC 43589 / DSM 3109 / JCM 10099 / NBRC 100826 / MSB8</strain>
    </source>
</reference>
<gene>
    <name evidence="5" type="ordered locus">TM_1287</name>
</gene>
<dbReference type="EMBL" id="AE000512">
    <property type="protein sequence ID" value="AAD36361.1"/>
    <property type="molecule type" value="Genomic_DNA"/>
</dbReference>
<dbReference type="PIR" id="F72271">
    <property type="entry name" value="F72271"/>
</dbReference>
<dbReference type="RefSeq" id="NP_229091.1">
    <property type="nucleotide sequence ID" value="NC_000853.1"/>
</dbReference>
<dbReference type="PDB" id="1O4T">
    <property type="method" value="X-ray"/>
    <property type="resolution" value="1.95 A"/>
    <property type="chains" value="A/B=1-121"/>
</dbReference>
<dbReference type="PDBsum" id="1O4T"/>
<dbReference type="SMR" id="Q9X113"/>
<dbReference type="STRING" id="243274.TM_1287"/>
<dbReference type="PaxDb" id="243274-THEMA_07900"/>
<dbReference type="EnsemblBacteria" id="AAD36361">
    <property type="protein sequence ID" value="AAD36361"/>
    <property type="gene ID" value="TM_1287"/>
</dbReference>
<dbReference type="KEGG" id="tma:TM1287"/>
<dbReference type="PATRIC" id="fig|243274.5.peg.1303"/>
<dbReference type="eggNOG" id="COG0662">
    <property type="taxonomic scope" value="Bacteria"/>
</dbReference>
<dbReference type="InParanoid" id="Q9X113"/>
<dbReference type="OrthoDB" id="9797047at2"/>
<dbReference type="EvolutionaryTrace" id="Q9X113"/>
<dbReference type="Proteomes" id="UP000008183">
    <property type="component" value="Chromosome"/>
</dbReference>
<dbReference type="GO" id="GO:0042802">
    <property type="term" value="F:identical protein binding"/>
    <property type="evidence" value="ECO:0000314"/>
    <property type="project" value="UniProtKB"/>
</dbReference>
<dbReference type="GO" id="GO:0030145">
    <property type="term" value="F:manganese ion binding"/>
    <property type="evidence" value="ECO:0000314"/>
    <property type="project" value="UniProtKB"/>
</dbReference>
<dbReference type="GO" id="GO:0046564">
    <property type="term" value="F:oxalate decarboxylase activity"/>
    <property type="evidence" value="ECO:0000250"/>
    <property type="project" value="UniProtKB"/>
</dbReference>
<dbReference type="GO" id="GO:0042803">
    <property type="term" value="F:protein homodimerization activity"/>
    <property type="evidence" value="ECO:0000314"/>
    <property type="project" value="UniProtKB"/>
</dbReference>
<dbReference type="GO" id="GO:0033609">
    <property type="term" value="P:oxalate metabolic process"/>
    <property type="evidence" value="ECO:0000250"/>
    <property type="project" value="UniProtKB"/>
</dbReference>
<dbReference type="CDD" id="cd02221">
    <property type="entry name" value="cupin_TM1287-like"/>
    <property type="match status" value="1"/>
</dbReference>
<dbReference type="Gene3D" id="2.60.120.10">
    <property type="entry name" value="Jelly Rolls"/>
    <property type="match status" value="1"/>
</dbReference>
<dbReference type="InterPro" id="IPR013096">
    <property type="entry name" value="Cupin_2"/>
</dbReference>
<dbReference type="InterPro" id="IPR051610">
    <property type="entry name" value="GPI/OXD"/>
</dbReference>
<dbReference type="InterPro" id="IPR014710">
    <property type="entry name" value="RmlC-like_jellyroll"/>
</dbReference>
<dbReference type="InterPro" id="IPR011051">
    <property type="entry name" value="RmlC_Cupin_sf"/>
</dbReference>
<dbReference type="PANTHER" id="PTHR35848:SF6">
    <property type="entry name" value="CUPIN TYPE-2 DOMAIN-CONTAINING PROTEIN"/>
    <property type="match status" value="1"/>
</dbReference>
<dbReference type="PANTHER" id="PTHR35848">
    <property type="entry name" value="OXALATE-BINDING PROTEIN"/>
    <property type="match status" value="1"/>
</dbReference>
<dbReference type="Pfam" id="PF07883">
    <property type="entry name" value="Cupin_2"/>
    <property type="match status" value="1"/>
</dbReference>
<dbReference type="SUPFAM" id="SSF51182">
    <property type="entry name" value="RmlC-like cupins"/>
    <property type="match status" value="1"/>
</dbReference>
<proteinExistence type="evidence at protein level"/>
<organism evidence="5">
    <name type="scientific">Thermotoga maritima (strain ATCC 43589 / DSM 3109 / JCM 10099 / NBRC 100826 / MSB8)</name>
    <dbReference type="NCBI Taxonomy" id="243274"/>
    <lineage>
        <taxon>Bacteria</taxon>
        <taxon>Thermotogati</taxon>
        <taxon>Thermotogota</taxon>
        <taxon>Thermotogae</taxon>
        <taxon>Thermotogales</taxon>
        <taxon>Thermotogaceae</taxon>
        <taxon>Thermotoga</taxon>
    </lineage>
</organism>
<evidence type="ECO:0000255" key="1"/>
<evidence type="ECO:0000269" key="2">
    <source>
    </source>
</evidence>
<evidence type="ECO:0000303" key="3">
    <source>
    </source>
</evidence>
<evidence type="ECO:0000305" key="4">
    <source>
    </source>
</evidence>
<evidence type="ECO:0000312" key="5">
    <source>
        <dbReference type="EMBL" id="AAD36361.1"/>
    </source>
</evidence>
<evidence type="ECO:0000312" key="6">
    <source>
        <dbReference type="Proteomes" id="UP000008183"/>
    </source>
</evidence>
<evidence type="ECO:0007744" key="7">
    <source>
        <dbReference type="PDB" id="1O4T"/>
    </source>
</evidence>
<evidence type="ECO:0007829" key="8">
    <source>
        <dbReference type="PDB" id="1O4T"/>
    </source>
</evidence>
<keyword id="KW-0002">3D-structure</keyword>
<keyword id="KW-0464">Manganese</keyword>
<keyword id="KW-0479">Metal-binding</keyword>
<keyword id="KW-1185">Reference proteome</keyword>